<accession>Q14137</accession>
<accession>Q969Z6</accession>
<accession>Q96IS8</accession>
<accession>Q96Q25</accession>
<accession>Q9BSA7</accession>
<accession>Q9BVM0</accession>
<proteinExistence type="evidence at protein level"/>
<protein>
    <recommendedName>
        <fullName evidence="2">Ribosome biogenesis protein BOP1</fullName>
    </recommendedName>
    <alternativeName>
        <fullName evidence="2">Block of proliferation 1 protein</fullName>
    </alternativeName>
</protein>
<dbReference type="EMBL" id="AB060694">
    <property type="protein sequence ID" value="BAB70666.1"/>
    <property type="molecule type" value="mRNA"/>
</dbReference>
<dbReference type="EMBL" id="AC145291">
    <property type="status" value="NOT_ANNOTATED_CDS"/>
    <property type="molecule type" value="Genomic_DNA"/>
</dbReference>
<dbReference type="EMBL" id="AC231662">
    <property type="status" value="NOT_ANNOTATED_CDS"/>
    <property type="molecule type" value="Genomic_DNA"/>
</dbReference>
<dbReference type="EMBL" id="BC001086">
    <property type="protein sequence ID" value="AAH01086.2"/>
    <property type="molecule type" value="mRNA"/>
</dbReference>
<dbReference type="EMBL" id="BC005160">
    <property type="protein sequence ID" value="AAH05160.2"/>
    <property type="molecule type" value="mRNA"/>
</dbReference>
<dbReference type="EMBL" id="BC007274">
    <property type="protein sequence ID" value="AAH07274.1"/>
    <property type="molecule type" value="mRNA"/>
</dbReference>
<dbReference type="EMBL" id="BC013787">
    <property type="protein sequence ID" value="AAH13787.1"/>
    <property type="molecule type" value="mRNA"/>
</dbReference>
<dbReference type="EMBL" id="BC013980">
    <property type="protein sequence ID" value="AAH13980.1"/>
    <property type="molecule type" value="mRNA"/>
</dbReference>
<dbReference type="EMBL" id="BC017674">
    <property type="protein sequence ID" value="AAH17674.1"/>
    <property type="molecule type" value="mRNA"/>
</dbReference>
<dbReference type="EMBL" id="D50914">
    <property type="protein sequence ID" value="BAA09473.1"/>
    <property type="molecule type" value="mRNA"/>
</dbReference>
<dbReference type="CCDS" id="CCDS6418.2">
    <molecule id="Q14137-1"/>
</dbReference>
<dbReference type="RefSeq" id="NP_056016.1">
    <molecule id="Q14137-1"/>
    <property type="nucleotide sequence ID" value="NM_015201.5"/>
</dbReference>
<dbReference type="PDB" id="8FKP">
    <property type="method" value="EM"/>
    <property type="resolution" value="2.85 A"/>
    <property type="chains" value="SS=1-746"/>
</dbReference>
<dbReference type="PDB" id="8FKQ">
    <property type="method" value="EM"/>
    <property type="resolution" value="2.76 A"/>
    <property type="chains" value="SS=1-746"/>
</dbReference>
<dbReference type="PDB" id="8FKR">
    <property type="method" value="EM"/>
    <property type="resolution" value="2.89 A"/>
    <property type="chains" value="SS=1-746"/>
</dbReference>
<dbReference type="PDB" id="8FKS">
    <property type="method" value="EM"/>
    <property type="resolution" value="2.88 A"/>
    <property type="chains" value="SS=1-746"/>
</dbReference>
<dbReference type="PDB" id="8FKT">
    <property type="method" value="EM"/>
    <property type="resolution" value="2.81 A"/>
    <property type="chains" value="SS=1-746"/>
</dbReference>
<dbReference type="PDB" id="8FKU">
    <property type="method" value="EM"/>
    <property type="resolution" value="2.82 A"/>
    <property type="chains" value="SS=1-746"/>
</dbReference>
<dbReference type="PDB" id="8FKV">
    <property type="method" value="EM"/>
    <property type="resolution" value="2.47 A"/>
    <property type="chains" value="SS=1-746"/>
</dbReference>
<dbReference type="PDB" id="8FKW">
    <property type="method" value="EM"/>
    <property type="resolution" value="2.50 A"/>
    <property type="chains" value="SS=1-746"/>
</dbReference>
<dbReference type="PDB" id="8FKX">
    <property type="method" value="EM"/>
    <property type="resolution" value="2.59 A"/>
    <property type="chains" value="SS=1-746"/>
</dbReference>
<dbReference type="PDB" id="8FKY">
    <property type="method" value="EM"/>
    <property type="resolution" value="2.67 A"/>
    <property type="chains" value="SS=1-746"/>
</dbReference>
<dbReference type="PDBsum" id="8FKP"/>
<dbReference type="PDBsum" id="8FKQ"/>
<dbReference type="PDBsum" id="8FKR"/>
<dbReference type="PDBsum" id="8FKS"/>
<dbReference type="PDBsum" id="8FKT"/>
<dbReference type="PDBsum" id="8FKU"/>
<dbReference type="PDBsum" id="8FKV"/>
<dbReference type="PDBsum" id="8FKW"/>
<dbReference type="PDBsum" id="8FKX"/>
<dbReference type="PDBsum" id="8FKY"/>
<dbReference type="EMDB" id="EMD-29252"/>
<dbReference type="EMDB" id="EMD-29253"/>
<dbReference type="EMDB" id="EMD-29254"/>
<dbReference type="EMDB" id="EMD-29255"/>
<dbReference type="EMDB" id="EMD-29256"/>
<dbReference type="EMDB" id="EMD-29257"/>
<dbReference type="EMDB" id="EMD-29258"/>
<dbReference type="EMDB" id="EMD-29259"/>
<dbReference type="EMDB" id="EMD-29260"/>
<dbReference type="EMDB" id="EMD-29261"/>
<dbReference type="SMR" id="Q14137"/>
<dbReference type="BioGRID" id="116850">
    <property type="interactions" value="202"/>
</dbReference>
<dbReference type="ComplexPortal" id="CPX-2846">
    <property type="entry name" value="PeBoW complex"/>
</dbReference>
<dbReference type="CORUM" id="Q14137"/>
<dbReference type="FunCoup" id="Q14137">
    <property type="interactions" value="1832"/>
</dbReference>
<dbReference type="IntAct" id="Q14137">
    <property type="interactions" value="101"/>
</dbReference>
<dbReference type="MINT" id="Q14137"/>
<dbReference type="STRING" id="9606.ENSP00000455106"/>
<dbReference type="GlyGen" id="Q14137">
    <property type="glycosylation" value="3 sites, 1 O-linked glycan (2 sites)"/>
</dbReference>
<dbReference type="iPTMnet" id="Q14137"/>
<dbReference type="PhosphoSitePlus" id="Q14137"/>
<dbReference type="SwissPalm" id="Q14137"/>
<dbReference type="BioMuta" id="BOP1"/>
<dbReference type="DMDM" id="23830903"/>
<dbReference type="jPOST" id="Q14137"/>
<dbReference type="MassIVE" id="Q14137"/>
<dbReference type="PaxDb" id="9606-ENSP00000455106"/>
<dbReference type="PeptideAtlas" id="Q14137"/>
<dbReference type="ProteomicsDB" id="59839">
    <molecule id="Q14137-1"/>
</dbReference>
<dbReference type="ProteomicsDB" id="77815"/>
<dbReference type="Pumba" id="Q14137"/>
<dbReference type="Antibodypedia" id="59721">
    <property type="antibodies" value="149 antibodies from 22 providers"/>
</dbReference>
<dbReference type="DNASU" id="23246"/>
<dbReference type="Ensembl" id="ENST00000569669.6">
    <molecule id="Q14137-1"/>
    <property type="protein sequence ID" value="ENSP00000455106.1"/>
    <property type="gene ID" value="ENSG00000261236.8"/>
</dbReference>
<dbReference type="GeneID" id="23246"/>
<dbReference type="KEGG" id="hsa:23246"/>
<dbReference type="MANE-Select" id="ENST00000569669.6">
    <property type="protein sequence ID" value="ENSP00000455106.1"/>
    <property type="RefSeq nucleotide sequence ID" value="NM_015201.5"/>
    <property type="RefSeq protein sequence ID" value="NP_056016.1"/>
</dbReference>
<dbReference type="UCSC" id="uc033ccj.2">
    <molecule id="Q14137-1"/>
    <property type="organism name" value="human"/>
</dbReference>
<dbReference type="AGR" id="HGNC:15519"/>
<dbReference type="CTD" id="23246"/>
<dbReference type="DisGeNET" id="23246"/>
<dbReference type="GeneCards" id="BOP1"/>
<dbReference type="HGNC" id="HGNC:15519">
    <property type="gene designation" value="BOP1"/>
</dbReference>
<dbReference type="HPA" id="ENSG00000261236">
    <property type="expression patterns" value="Tissue enhanced (skeletal)"/>
</dbReference>
<dbReference type="MIM" id="610596">
    <property type="type" value="gene"/>
</dbReference>
<dbReference type="neXtProt" id="NX_Q14137"/>
<dbReference type="OpenTargets" id="ENSG00000261236"/>
<dbReference type="PharmGKB" id="PA25398"/>
<dbReference type="VEuPathDB" id="HostDB:ENSG00000261236"/>
<dbReference type="eggNOG" id="KOG0650">
    <property type="taxonomic scope" value="Eukaryota"/>
</dbReference>
<dbReference type="GeneTree" id="ENSGT00390000018422"/>
<dbReference type="HOGENOM" id="CLU_011390_0_1_1"/>
<dbReference type="InParanoid" id="Q14137"/>
<dbReference type="OMA" id="MRPAKGE"/>
<dbReference type="OrthoDB" id="5571054at2759"/>
<dbReference type="PAN-GO" id="Q14137">
    <property type="GO annotations" value="4 GO annotations based on evolutionary models"/>
</dbReference>
<dbReference type="PhylomeDB" id="Q14137"/>
<dbReference type="TreeFam" id="TF300437"/>
<dbReference type="PathwayCommons" id="Q14137"/>
<dbReference type="Reactome" id="R-HSA-6791226">
    <property type="pathway name" value="Major pathway of rRNA processing in the nucleolus and cytosol"/>
</dbReference>
<dbReference type="SignaLink" id="Q14137"/>
<dbReference type="BioGRID-ORCS" id="23246">
    <property type="hits" value="694 hits in 1159 CRISPR screens"/>
</dbReference>
<dbReference type="CD-CODE" id="91857CE7">
    <property type="entry name" value="Nucleolus"/>
</dbReference>
<dbReference type="ChiTaRS" id="BOP1">
    <property type="organism name" value="human"/>
</dbReference>
<dbReference type="GeneWiki" id="BOP1"/>
<dbReference type="GenomeRNAi" id="23246"/>
<dbReference type="Pharos" id="Q14137">
    <property type="development level" value="Tbio"/>
</dbReference>
<dbReference type="PRO" id="PR:Q14137"/>
<dbReference type="Proteomes" id="UP000005640">
    <property type="component" value="Chromosome 8"/>
</dbReference>
<dbReference type="RNAct" id="Q14137">
    <property type="molecule type" value="protein"/>
</dbReference>
<dbReference type="Bgee" id="ENSG00000261236">
    <property type="expression patterns" value="Expressed in right lobe of thyroid gland and 97 other cell types or tissues"/>
</dbReference>
<dbReference type="ExpressionAtlas" id="Q14137">
    <property type="expression patterns" value="baseline and differential"/>
</dbReference>
<dbReference type="GO" id="GO:0005694">
    <property type="term" value="C:chromosome"/>
    <property type="evidence" value="ECO:0000314"/>
    <property type="project" value="HPA"/>
</dbReference>
<dbReference type="GO" id="GO:0005730">
    <property type="term" value="C:nucleolus"/>
    <property type="evidence" value="ECO:0000314"/>
    <property type="project" value="HPA"/>
</dbReference>
<dbReference type="GO" id="GO:0005654">
    <property type="term" value="C:nucleoplasm"/>
    <property type="evidence" value="ECO:0000314"/>
    <property type="project" value="HPA"/>
</dbReference>
<dbReference type="GO" id="GO:0070545">
    <property type="term" value="C:PeBoW complex"/>
    <property type="evidence" value="ECO:0000314"/>
    <property type="project" value="UniProtKB"/>
</dbReference>
<dbReference type="GO" id="GO:0030687">
    <property type="term" value="C:preribosome, large subunit precursor"/>
    <property type="evidence" value="ECO:0000318"/>
    <property type="project" value="GO_Central"/>
</dbReference>
<dbReference type="GO" id="GO:1990904">
    <property type="term" value="C:ribonucleoprotein complex"/>
    <property type="evidence" value="ECO:0000314"/>
    <property type="project" value="MGI"/>
</dbReference>
<dbReference type="GO" id="GO:0043021">
    <property type="term" value="F:ribonucleoprotein complex binding"/>
    <property type="evidence" value="ECO:0000318"/>
    <property type="project" value="GO_Central"/>
</dbReference>
<dbReference type="GO" id="GO:0003723">
    <property type="term" value="F:RNA binding"/>
    <property type="evidence" value="ECO:0007005"/>
    <property type="project" value="UniProtKB"/>
</dbReference>
<dbReference type="GO" id="GO:0008283">
    <property type="term" value="P:cell population proliferation"/>
    <property type="evidence" value="ECO:0007669"/>
    <property type="project" value="Ensembl"/>
</dbReference>
<dbReference type="GO" id="GO:0000448">
    <property type="term" value="P:cleavage in ITS2 between 5.8S rRNA and LSU-rRNA of tricistronic rRNA transcript (SSU-rRNA, 5.8S rRNA, LSU-rRNA)"/>
    <property type="evidence" value="ECO:0007669"/>
    <property type="project" value="Ensembl"/>
</dbReference>
<dbReference type="GO" id="GO:0000463">
    <property type="term" value="P:maturation of LSU-rRNA from tricistronic rRNA transcript (SSU-rRNA, 5.8S rRNA, LSU-rRNA)"/>
    <property type="evidence" value="ECO:0000315"/>
    <property type="project" value="UniProtKB"/>
</dbReference>
<dbReference type="GO" id="GO:0051726">
    <property type="term" value="P:regulation of cell cycle"/>
    <property type="evidence" value="ECO:0000315"/>
    <property type="project" value="UniProtKB"/>
</dbReference>
<dbReference type="GO" id="GO:1901796">
    <property type="term" value="P:regulation of signal transduction by p53 class mediator"/>
    <property type="evidence" value="ECO:0000315"/>
    <property type="project" value="UniProtKB"/>
</dbReference>
<dbReference type="GO" id="GO:0000027">
    <property type="term" value="P:ribosomal large subunit assembly"/>
    <property type="evidence" value="ECO:0000315"/>
    <property type="project" value="UniProtKB"/>
</dbReference>
<dbReference type="GO" id="GO:0042254">
    <property type="term" value="P:ribosome biogenesis"/>
    <property type="evidence" value="ECO:0000303"/>
    <property type="project" value="UniProtKB"/>
</dbReference>
<dbReference type="FunFam" id="2.130.10.10:FF:000061">
    <property type="entry name" value="Ribosome biogenesis protein BOP1 homolog"/>
    <property type="match status" value="1"/>
</dbReference>
<dbReference type="Gene3D" id="2.130.10.10">
    <property type="entry name" value="YVTN repeat-like/Quinoprotein amine dehydrogenase"/>
    <property type="match status" value="1"/>
</dbReference>
<dbReference type="HAMAP" id="MF_03027">
    <property type="entry name" value="BOP1"/>
    <property type="match status" value="1"/>
</dbReference>
<dbReference type="InterPro" id="IPR028598">
    <property type="entry name" value="BOP1/Erb1"/>
</dbReference>
<dbReference type="InterPro" id="IPR012953">
    <property type="entry name" value="BOP1_N_dom"/>
</dbReference>
<dbReference type="InterPro" id="IPR015943">
    <property type="entry name" value="WD40/YVTN_repeat-like_dom_sf"/>
</dbReference>
<dbReference type="InterPro" id="IPR019775">
    <property type="entry name" value="WD40_repeat_CS"/>
</dbReference>
<dbReference type="InterPro" id="IPR036322">
    <property type="entry name" value="WD40_repeat_dom_sf"/>
</dbReference>
<dbReference type="InterPro" id="IPR001680">
    <property type="entry name" value="WD40_rpt"/>
</dbReference>
<dbReference type="PANTHER" id="PTHR17605:SF0">
    <property type="entry name" value="RIBOSOME BIOGENESIS PROTEIN BOP1"/>
    <property type="match status" value="1"/>
</dbReference>
<dbReference type="PANTHER" id="PTHR17605">
    <property type="entry name" value="RIBOSOME BIOGENESIS PROTEIN BOP1 BLOCK OF PROLIFERATION 1 PROTEIN"/>
    <property type="match status" value="1"/>
</dbReference>
<dbReference type="Pfam" id="PF08145">
    <property type="entry name" value="BOP1NT"/>
    <property type="match status" value="1"/>
</dbReference>
<dbReference type="Pfam" id="PF00400">
    <property type="entry name" value="WD40"/>
    <property type="match status" value="4"/>
</dbReference>
<dbReference type="SMART" id="SM01035">
    <property type="entry name" value="BOP1NT"/>
    <property type="match status" value="1"/>
</dbReference>
<dbReference type="SMART" id="SM00320">
    <property type="entry name" value="WD40"/>
    <property type="match status" value="7"/>
</dbReference>
<dbReference type="SUPFAM" id="SSF50978">
    <property type="entry name" value="WD40 repeat-like"/>
    <property type="match status" value="1"/>
</dbReference>
<dbReference type="PROSITE" id="PS00678">
    <property type="entry name" value="WD_REPEATS_1"/>
    <property type="match status" value="1"/>
</dbReference>
<dbReference type="PROSITE" id="PS50082">
    <property type="entry name" value="WD_REPEATS_2"/>
    <property type="match status" value="2"/>
</dbReference>
<dbReference type="PROSITE" id="PS50294">
    <property type="entry name" value="WD_REPEATS_REGION"/>
    <property type="match status" value="2"/>
</dbReference>
<keyword id="KW-0002">3D-structure</keyword>
<keyword id="KW-0025">Alternative splicing</keyword>
<keyword id="KW-0539">Nucleus</keyword>
<keyword id="KW-0597">Phosphoprotein</keyword>
<keyword id="KW-1267">Proteomics identification</keyword>
<keyword id="KW-1185">Reference proteome</keyword>
<keyword id="KW-0677">Repeat</keyword>
<keyword id="KW-0690">Ribosome biogenesis</keyword>
<keyword id="KW-0698">rRNA processing</keyword>
<keyword id="KW-0853">WD repeat</keyword>
<comment type="function">
    <text evidence="2 8 9">Component of the PeBoW complex, which is required for maturation of 28S and 5.8S ribosomal RNAs and formation of the 60S ribosome.</text>
</comment>
<comment type="subunit">
    <text evidence="2 5 6 7 8 10">Component of the PeBoW complex, composed of BOP1, PES1 and WDR12 (PubMed:16043514, PubMed:16738141, PubMed:17189298, PubMed:17353269). The complex is held together by BOP1, which interacts with PES1 via its N-terminal domain and with WDR12 via a high-affinity interaction between the seven-bladed beta-propeller domains of the 2 proteins. The NOP7 complex associates with the 66S pre-ribosome (By similarity). The PeBoW complex associates with DDX27, BOP1 interacts directly with DDX27 (PubMed:25825154).</text>
</comment>
<comment type="interaction">
    <interactant intactId="EBI-1050828">
        <id>Q14137</id>
    </interactant>
    <interactant intactId="EBI-1053271">
        <id>O00541</id>
        <label>PES1</label>
    </interactant>
    <organismsDiffer>false</organismsDiffer>
    <experiments>6</experiments>
</comment>
<comment type="interaction">
    <interactant intactId="EBI-1050828">
        <id>Q14137</id>
    </interactant>
    <interactant intactId="EBI-2490660">
        <id>Q9GZL7</id>
        <label>WDR12</label>
    </interactant>
    <organismsDiffer>false</organismsDiffer>
    <experiments>4</experiments>
</comment>
<comment type="subcellular location">
    <subcellularLocation>
        <location evidence="2 4">Nucleus</location>
        <location evidence="2 4">Nucleolus</location>
    </subcellularLocation>
    <subcellularLocation>
        <location evidence="2 4">Nucleus</location>
        <location evidence="2 4">Nucleoplasm</location>
    </subcellularLocation>
</comment>
<comment type="alternative products">
    <event type="alternative splicing"/>
    <isoform>
        <id>Q14137-1</id>
        <name>1</name>
        <sequence type="displayed"/>
    </isoform>
    <isoform>
        <id>Q14137-2</id>
        <name>2</name>
        <sequence type="described" ref="VSP_056391"/>
    </isoform>
</comment>
<comment type="induction">
    <text evidence="5">By MYC.</text>
</comment>
<comment type="similarity">
    <text evidence="2">Belongs to the WD repeat BOP1/ERB1 family.</text>
</comment>
<comment type="online information" name="Atlas of Genetics and Cytogenetics in Oncology and Haematology">
    <link uri="https://atlasgeneticsoncology.org/gene/44348/BOP1"/>
</comment>
<organism>
    <name type="scientific">Homo sapiens</name>
    <name type="common">Human</name>
    <dbReference type="NCBI Taxonomy" id="9606"/>
    <lineage>
        <taxon>Eukaryota</taxon>
        <taxon>Metazoa</taxon>
        <taxon>Chordata</taxon>
        <taxon>Craniata</taxon>
        <taxon>Vertebrata</taxon>
        <taxon>Euteleostomi</taxon>
        <taxon>Mammalia</taxon>
        <taxon>Eutheria</taxon>
        <taxon>Euarchontoglires</taxon>
        <taxon>Primates</taxon>
        <taxon>Haplorrhini</taxon>
        <taxon>Catarrhini</taxon>
        <taxon>Hominidae</taxon>
        <taxon>Homo</taxon>
    </lineage>
</organism>
<evidence type="ECO:0000250" key="1"/>
<evidence type="ECO:0000255" key="2">
    <source>
        <dbReference type="HAMAP-Rule" id="MF_03027"/>
    </source>
</evidence>
<evidence type="ECO:0000256" key="3">
    <source>
        <dbReference type="SAM" id="MobiDB-lite"/>
    </source>
</evidence>
<evidence type="ECO:0000269" key="4">
    <source>
    </source>
</evidence>
<evidence type="ECO:0000269" key="5">
    <source>
    </source>
</evidence>
<evidence type="ECO:0000269" key="6">
    <source>
    </source>
</evidence>
<evidence type="ECO:0000269" key="7">
    <source>
    </source>
</evidence>
<evidence type="ECO:0000269" key="8">
    <source>
    </source>
</evidence>
<evidence type="ECO:0000269" key="9">
    <source>
    </source>
</evidence>
<evidence type="ECO:0000269" key="10">
    <source>
    </source>
</evidence>
<evidence type="ECO:0000303" key="11">
    <source>
    </source>
</evidence>
<evidence type="ECO:0000305" key="12"/>
<evidence type="ECO:0007744" key="13">
    <source>
    </source>
</evidence>
<evidence type="ECO:0007744" key="14">
    <source>
    </source>
</evidence>
<evidence type="ECO:0007744" key="15">
    <source>
    </source>
</evidence>
<evidence type="ECO:0007744" key="16">
    <source>
    </source>
</evidence>
<evidence type="ECO:0007744" key="17">
    <source>
    </source>
</evidence>
<evidence type="ECO:0007744" key="18">
    <source>
    </source>
</evidence>
<evidence type="ECO:0007744" key="19">
    <source>
    </source>
</evidence>
<gene>
    <name evidence="2" type="primary">BOP1</name>
    <name type="synonym">KIAA0124</name>
</gene>
<feature type="chain" id="PRO_0000050885" description="Ribosome biogenesis protein BOP1">
    <location>
        <begin position="1"/>
        <end position="746"/>
    </location>
</feature>
<feature type="repeat" description="WD 1">
    <location>
        <begin position="411"/>
        <end position="450"/>
    </location>
</feature>
<feature type="repeat" description="WD 2">
    <location>
        <begin position="452"/>
        <end position="492"/>
    </location>
</feature>
<feature type="repeat" description="WD 3">
    <location>
        <begin position="532"/>
        <end position="576"/>
    </location>
</feature>
<feature type="repeat" description="WD 4">
    <location>
        <begin position="577"/>
        <end position="615"/>
    </location>
</feature>
<feature type="repeat" description="WD 5">
    <location>
        <begin position="618"/>
        <end position="657"/>
    </location>
</feature>
<feature type="repeat" description="WD 6">
    <location>
        <begin position="661"/>
        <end position="700"/>
    </location>
</feature>
<feature type="repeat" description="WD 7">
    <location>
        <begin position="716"/>
        <end position="746"/>
    </location>
</feature>
<feature type="region of interest" description="Disordered" evidence="3">
    <location>
        <begin position="1"/>
        <end position="116"/>
    </location>
</feature>
<feature type="region of interest" description="Sufficient for nucleolar localization" evidence="1">
    <location>
        <begin position="265"/>
        <end position="427"/>
    </location>
</feature>
<feature type="compositionally biased region" description="Low complexity" evidence="3">
    <location>
        <begin position="43"/>
        <end position="65"/>
    </location>
</feature>
<feature type="compositionally biased region" description="Acidic residues" evidence="3">
    <location>
        <begin position="66"/>
        <end position="87"/>
    </location>
</feature>
<feature type="compositionally biased region" description="Basic and acidic residues" evidence="3">
    <location>
        <begin position="88"/>
        <end position="99"/>
    </location>
</feature>
<feature type="modified residue" description="Phosphothreonine" evidence="13 14">
    <location>
        <position position="106"/>
    </location>
</feature>
<feature type="modified residue" description="Phosphotyrosine" evidence="19">
    <location>
        <position position="122"/>
    </location>
</feature>
<feature type="modified residue" description="Phosphoserine" evidence="14 15 16 17 18 19">
    <location>
        <position position="126"/>
    </location>
</feature>
<feature type="modified residue" description="Phosphoserine" evidence="14 15 16 17 18 19">
    <location>
        <position position="127"/>
    </location>
</feature>
<feature type="splice variant" id="VSP_056391" description="In isoform 2." evidence="11">
    <location>
        <begin position="1"/>
        <end position="112"/>
    </location>
</feature>
<feature type="sequence conflict" description="In Ref. 4; BAA09473." evidence="12" ref="4">
    <original>R</original>
    <variation>H</variation>
    <location>
        <position position="577"/>
    </location>
</feature>
<sequence>MAGSRGAGRTAAPSVRPEKRRSEPELEPEPEPEPPLLCTSPLSHSTGSDSGVSDSEESVFSGLEDSGSDSSEDDDEGDEEGEDGALDDEGHSGIKKTTEEQVQASTPCPRTEMASARIGDEYAEDSSDEEDIRNTVGNVPLEWYDDFPHVGYDLDGRRIYKPLRTRDELDQFLDKMDDPDYWRTVQDPMTGRDLRLTDEQVALVRRLQSGQFGDVGFNPYEPAVDFFSGDVMIHPVTNRPADKRSFIPSLVEKEKVSRMVHAIKMGWIQPRRPRDPTPSFYDLWAQEDPNAVLGRHKMHVPAPKLALPGHAESYNPPPEYLLSEEERLAWEQQEPGERKLSFLPRKFPSLRAVPAYGRFIQERFERCLDLYLCPRQRKMRVNVDPEDLIPKLPRPRDLQPFPTCQALVYRGHSDLVRCLSVSPGGQWLVSGSDDGSLRLWEVATARCVRTVPVGGVVKSVAWNPSPAVCLVAAAVEDSVLLLNPALGDRLVAGSTDQLLSAFVPPEEPPLQPARWLEASEEERQVGLRLRICHGKPVTQVTWHGRGDYLAVVLATQGHTQVLIHQLSRRRSQSPFRRSHGQVQRVAFHPARPFLLVASQRSVRLYHLLRQELTKKLMPNCKWVSSLAVHPAGDNVICGSYDSKLVWFDLDLSTKPYRMLRHHKKALRAVAFHPRYPLFASGSDDGSVIVCHGMVYNDLLQNPLLVPVKVLKGHVLTRDLGVLDVIFHPTQPWVFSSGADGTVRLFT</sequence>
<reference key="1">
    <citation type="journal article" date="2001" name="Biochem. Biophys. Res. Commun.">
        <title>Gene cloning of immunogenic antigens overexpressed in pancreatic cancer.</title>
        <authorList>
            <person name="Nakatsura T."/>
            <person name="Senju S."/>
            <person name="Yamada K."/>
            <person name="Jotsuka T."/>
            <person name="Ogawa M."/>
            <person name="Nishimura Y."/>
        </authorList>
    </citation>
    <scope>NUCLEOTIDE SEQUENCE [MRNA] (ISOFORM 2)</scope>
</reference>
<reference key="2">
    <citation type="journal article" date="2006" name="Nature">
        <title>DNA sequence and analysis of human chromosome 8.</title>
        <authorList>
            <person name="Nusbaum C."/>
            <person name="Mikkelsen T.S."/>
            <person name="Zody M.C."/>
            <person name="Asakawa S."/>
            <person name="Taudien S."/>
            <person name="Garber M."/>
            <person name="Kodira C.D."/>
            <person name="Schueler M.G."/>
            <person name="Shimizu A."/>
            <person name="Whittaker C.A."/>
            <person name="Chang J.L."/>
            <person name="Cuomo C.A."/>
            <person name="Dewar K."/>
            <person name="FitzGerald M.G."/>
            <person name="Yang X."/>
            <person name="Allen N.R."/>
            <person name="Anderson S."/>
            <person name="Asakawa T."/>
            <person name="Blechschmidt K."/>
            <person name="Bloom T."/>
            <person name="Borowsky M.L."/>
            <person name="Butler J."/>
            <person name="Cook A."/>
            <person name="Corum B."/>
            <person name="DeArellano K."/>
            <person name="DeCaprio D."/>
            <person name="Dooley K.T."/>
            <person name="Dorris L. III"/>
            <person name="Engels R."/>
            <person name="Gloeckner G."/>
            <person name="Hafez N."/>
            <person name="Hagopian D.S."/>
            <person name="Hall J.L."/>
            <person name="Ishikawa S.K."/>
            <person name="Jaffe D.B."/>
            <person name="Kamat A."/>
            <person name="Kudoh J."/>
            <person name="Lehmann R."/>
            <person name="Lokitsang T."/>
            <person name="Macdonald P."/>
            <person name="Major J.E."/>
            <person name="Matthews C.D."/>
            <person name="Mauceli E."/>
            <person name="Menzel U."/>
            <person name="Mihalev A.H."/>
            <person name="Minoshima S."/>
            <person name="Murayama Y."/>
            <person name="Naylor J.W."/>
            <person name="Nicol R."/>
            <person name="Nguyen C."/>
            <person name="O'Leary S.B."/>
            <person name="O'Neill K."/>
            <person name="Parker S.C.J."/>
            <person name="Polley A."/>
            <person name="Raymond C.K."/>
            <person name="Reichwald K."/>
            <person name="Rodriguez J."/>
            <person name="Sasaki T."/>
            <person name="Schilhabel M."/>
            <person name="Siddiqui R."/>
            <person name="Smith C.L."/>
            <person name="Sneddon T.P."/>
            <person name="Talamas J.A."/>
            <person name="Tenzin P."/>
            <person name="Topham K."/>
            <person name="Venkataraman V."/>
            <person name="Wen G."/>
            <person name="Yamazaki S."/>
            <person name="Young S.K."/>
            <person name="Zeng Q."/>
            <person name="Zimmer A.R."/>
            <person name="Rosenthal A."/>
            <person name="Birren B.W."/>
            <person name="Platzer M."/>
            <person name="Shimizu N."/>
            <person name="Lander E.S."/>
        </authorList>
    </citation>
    <scope>NUCLEOTIDE SEQUENCE [LARGE SCALE GENOMIC DNA]</scope>
</reference>
<reference key="3">
    <citation type="journal article" date="2004" name="Genome Res.">
        <title>The status, quality, and expansion of the NIH full-length cDNA project: the Mammalian Gene Collection (MGC).</title>
        <authorList>
            <consortium name="The MGC Project Team"/>
        </authorList>
    </citation>
    <scope>NUCLEOTIDE SEQUENCE [LARGE SCALE MRNA] (ISOFORM 1)</scope>
    <source>
        <tissue>Brain</tissue>
        <tissue>Eye</tissue>
        <tissue>Lymph</tissue>
        <tissue>Muscle</tissue>
        <tissue>Pancreas</tissue>
    </source>
</reference>
<reference key="4">
    <citation type="journal article" date="1995" name="DNA Res.">
        <title>Prediction of the coding sequences of unidentified human genes. IV. The coding sequences of 40 new genes (KIAA0121-KIAA0160) deduced by analysis of cDNA clones from human cell line KG-1.</title>
        <authorList>
            <person name="Nagase T."/>
            <person name="Seki N."/>
            <person name="Tanaka A."/>
            <person name="Ishikawa K."/>
            <person name="Nomura N."/>
        </authorList>
    </citation>
    <scope>NUCLEOTIDE SEQUENCE [LARGE SCALE MRNA] OF 65-746 (ISOFORM 1)</scope>
    <source>
        <tissue>Bone marrow</tissue>
    </source>
</reference>
<reference key="5">
    <citation type="journal article" date="2002" name="Mol. Biol. Cell">
        <title>Functional proteomic analysis of human nucleolus.</title>
        <authorList>
            <person name="Scherl A."/>
            <person name="Coute Y."/>
            <person name="Deon C."/>
            <person name="Calle A."/>
            <person name="Kindbeiter K."/>
            <person name="Sanchez J.-C."/>
            <person name="Greco A."/>
            <person name="Hochstrasser D.F."/>
            <person name="Diaz J.-J."/>
        </authorList>
    </citation>
    <scope>SUBCELLULAR LOCATION [LARGE SCALE ANALYSIS]</scope>
    <source>
        <tissue>Cervix carcinoma</tissue>
    </source>
</reference>
<reference key="6">
    <citation type="journal article" date="2005" name="J. Cell Biol.">
        <title>Mammalian WDR12 is a novel member of the Pes1-Bop1 complex and is required for ribosome biogenesis and cell proliferation.</title>
        <authorList>
            <person name="Hoelzel M."/>
            <person name="Rohrmoser M."/>
            <person name="Schlee M."/>
            <person name="Grimm T."/>
            <person name="Harasim T."/>
            <person name="Malamoussi A."/>
            <person name="Gruber-Eber A."/>
            <person name="Kremmer E."/>
            <person name="Hiddemann W."/>
            <person name="Bornkamm G.W."/>
            <person name="Eick D."/>
        </authorList>
    </citation>
    <scope>INTERACTION WITH PES1 AND WDR12</scope>
    <scope>INDUCTION</scope>
</reference>
<reference key="7">
    <citation type="journal article" date="2006" name="Cell">
        <title>Global, in vivo, and site-specific phosphorylation dynamics in signaling networks.</title>
        <authorList>
            <person name="Olsen J.V."/>
            <person name="Blagoev B."/>
            <person name="Gnad F."/>
            <person name="Macek B."/>
            <person name="Kumar C."/>
            <person name="Mortensen P."/>
            <person name="Mann M."/>
        </authorList>
    </citation>
    <scope>IDENTIFICATION BY MASS SPECTROMETRY [LARGE SCALE ANALYSIS]</scope>
    <source>
        <tissue>Cervix carcinoma</tissue>
    </source>
</reference>
<reference key="8">
    <citation type="journal article" date="2006" name="Nat. Biotechnol.">
        <title>A probability-based approach for high-throughput protein phosphorylation analysis and site localization.</title>
        <authorList>
            <person name="Beausoleil S.A."/>
            <person name="Villen J."/>
            <person name="Gerber S.A."/>
            <person name="Rush J."/>
            <person name="Gygi S.P."/>
        </authorList>
    </citation>
    <scope>PHOSPHORYLATION [LARGE SCALE ANALYSIS] AT THR-106</scope>
    <scope>IDENTIFICATION BY MASS SPECTROMETRY [LARGE SCALE ANALYSIS]</scope>
    <source>
        <tissue>Cervix carcinoma</tissue>
    </source>
</reference>
<reference key="9">
    <citation type="journal article" date="2006" name="Nucleic Acids Res.">
        <title>Dominant-negative Pes1 mutants inhibit ribosomal RNA processing and cell proliferation via incorporation into the PeBoW-complex.</title>
        <authorList>
            <person name="Grimm T."/>
            <person name="Hoelzel M."/>
            <person name="Rohrmoser M."/>
            <person name="Harasim T."/>
            <person name="Malamoussi A."/>
            <person name="Gruber-Eber A."/>
            <person name="Kremmer E."/>
            <person name="Eick D."/>
        </authorList>
    </citation>
    <scope>INTERACTION WITH PES1 AND WDR12</scope>
</reference>
<reference key="10">
    <citation type="journal article" date="2007" name="Mol. Cell. Biol.">
        <title>Interdependence of Pes1, Bop1, and WDR12 controls nucleolar localization and assembly of the PeBoW complex required for maturation of the 60S ribosomal subunit.</title>
        <authorList>
            <person name="Rohrmoser M."/>
            <person name="Hoelzel M."/>
            <person name="Grimm T."/>
            <person name="Malamoussi A."/>
            <person name="Harasim T."/>
            <person name="Orban M."/>
            <person name="Pfisterer I."/>
            <person name="Gruber-Eber A."/>
            <person name="Kremmer E."/>
            <person name="Eick D."/>
        </authorList>
    </citation>
    <scope>FUNCTION</scope>
    <scope>INTERACTION WITH PES1 AND WDR12</scope>
</reference>
<reference key="11">
    <citation type="journal article" date="2007" name="Nucleic Acids Res.">
        <title>The BRCT domain of mammalian Pes1 is crucial for nucleolar localization and rRNA processing.</title>
        <authorList>
            <person name="Hoelzel M."/>
            <person name="Grimm T."/>
            <person name="Rohrmoser M."/>
            <person name="Malamoussi A."/>
            <person name="Harasim T."/>
            <person name="Gruber-Eber A."/>
            <person name="Kremmer E."/>
            <person name="Eick D."/>
        </authorList>
    </citation>
    <scope>INTERACTION WITH PES1 AND WDR12</scope>
</reference>
<reference key="12">
    <citation type="journal article" date="2008" name="Mol. Cell">
        <title>Kinase-selective enrichment enables quantitative phosphoproteomics of the kinome across the cell cycle.</title>
        <authorList>
            <person name="Daub H."/>
            <person name="Olsen J.V."/>
            <person name="Bairlein M."/>
            <person name="Gnad F."/>
            <person name="Oppermann F.S."/>
            <person name="Korner R."/>
            <person name="Greff Z."/>
            <person name="Keri G."/>
            <person name="Stemmann O."/>
            <person name="Mann M."/>
        </authorList>
    </citation>
    <scope>IDENTIFICATION BY MASS SPECTROMETRY [LARGE SCALE ANALYSIS]</scope>
    <source>
        <tissue>Cervix carcinoma</tissue>
    </source>
</reference>
<reference key="13">
    <citation type="journal article" date="2008" name="Proc. Natl. Acad. Sci. U.S.A.">
        <title>A quantitative atlas of mitotic phosphorylation.</title>
        <authorList>
            <person name="Dephoure N."/>
            <person name="Zhou C."/>
            <person name="Villen J."/>
            <person name="Beausoleil S.A."/>
            <person name="Bakalarski C.E."/>
            <person name="Elledge S.J."/>
            <person name="Gygi S.P."/>
        </authorList>
    </citation>
    <scope>PHOSPHORYLATION [LARGE SCALE ANALYSIS] AT THR-106; SER-126 AND SER-127</scope>
    <scope>IDENTIFICATION BY MASS SPECTROMETRY [LARGE SCALE ANALYSIS]</scope>
    <source>
        <tissue>Cervix carcinoma</tissue>
    </source>
</reference>
<reference key="14">
    <citation type="journal article" date="2008" name="Proteomics">
        <title>Large-scale phosphoproteome analysis of human liver tissue by enrichment and fractionation of phosphopeptides with strong anion exchange chromatography.</title>
        <authorList>
            <person name="Han G."/>
            <person name="Ye M."/>
            <person name="Zhou H."/>
            <person name="Jiang X."/>
            <person name="Feng S."/>
            <person name="Jiang X."/>
            <person name="Tian R."/>
            <person name="Wan D."/>
            <person name="Zou H."/>
            <person name="Gu J."/>
        </authorList>
    </citation>
    <scope>IDENTIFICATION BY MASS SPECTROMETRY [LARGE SCALE ANALYSIS]</scope>
    <source>
        <tissue>Liver</tissue>
    </source>
</reference>
<reference key="15">
    <citation type="journal article" date="2009" name="Anal. Chem.">
        <title>Lys-N and trypsin cover complementary parts of the phosphoproteome in a refined SCX-based approach.</title>
        <authorList>
            <person name="Gauci S."/>
            <person name="Helbig A.O."/>
            <person name="Slijper M."/>
            <person name="Krijgsveld J."/>
            <person name="Heck A.J."/>
            <person name="Mohammed S."/>
        </authorList>
    </citation>
    <scope>IDENTIFICATION BY MASS SPECTROMETRY [LARGE SCALE ANALYSIS]</scope>
</reference>
<reference key="16">
    <citation type="journal article" date="2009" name="Sci. Signal.">
        <title>Quantitative phosphoproteomic analysis of T cell receptor signaling reveals system-wide modulation of protein-protein interactions.</title>
        <authorList>
            <person name="Mayya V."/>
            <person name="Lundgren D.H."/>
            <person name="Hwang S.-I."/>
            <person name="Rezaul K."/>
            <person name="Wu L."/>
            <person name="Eng J.K."/>
            <person name="Rodionov V."/>
            <person name="Han D.K."/>
        </authorList>
    </citation>
    <scope>PHOSPHORYLATION [LARGE SCALE ANALYSIS] AT SER-126 AND SER-127</scope>
    <scope>IDENTIFICATION BY MASS SPECTROMETRY [LARGE SCALE ANALYSIS]</scope>
    <source>
        <tissue>Leukemic T-cell</tissue>
    </source>
</reference>
<reference key="17">
    <citation type="journal article" date="2010" name="Sci. Signal.">
        <title>Quantitative phosphoproteomics reveals widespread full phosphorylation site occupancy during mitosis.</title>
        <authorList>
            <person name="Olsen J.V."/>
            <person name="Vermeulen M."/>
            <person name="Santamaria A."/>
            <person name="Kumar C."/>
            <person name="Miller M.L."/>
            <person name="Jensen L.J."/>
            <person name="Gnad F."/>
            <person name="Cox J."/>
            <person name="Jensen T.S."/>
            <person name="Nigg E.A."/>
            <person name="Brunak S."/>
            <person name="Mann M."/>
        </authorList>
    </citation>
    <scope>PHOSPHORYLATION [LARGE SCALE ANALYSIS] AT SER-126 AND SER-127</scope>
    <scope>IDENTIFICATION BY MASS SPECTROMETRY [LARGE SCALE ANALYSIS]</scope>
    <source>
        <tissue>Cervix carcinoma</tissue>
    </source>
</reference>
<reference key="18">
    <citation type="journal article" date="2011" name="BMC Syst. Biol.">
        <title>Initial characterization of the human central proteome.</title>
        <authorList>
            <person name="Burkard T.R."/>
            <person name="Planyavsky M."/>
            <person name="Kaupe I."/>
            <person name="Breitwieser F.P."/>
            <person name="Buerckstuemmer T."/>
            <person name="Bennett K.L."/>
            <person name="Superti-Furga G."/>
            <person name="Colinge J."/>
        </authorList>
    </citation>
    <scope>IDENTIFICATION BY MASS SPECTROMETRY [LARGE SCALE ANALYSIS]</scope>
</reference>
<reference key="19">
    <citation type="journal article" date="2011" name="Sci. Signal.">
        <title>System-wide temporal characterization of the proteome and phosphoproteome of human embryonic stem cell differentiation.</title>
        <authorList>
            <person name="Rigbolt K.T."/>
            <person name="Prokhorova T.A."/>
            <person name="Akimov V."/>
            <person name="Henningsen J."/>
            <person name="Johansen P.T."/>
            <person name="Kratchmarova I."/>
            <person name="Kassem M."/>
            <person name="Mann M."/>
            <person name="Olsen J.V."/>
            <person name="Blagoev B."/>
        </authorList>
    </citation>
    <scope>PHOSPHORYLATION [LARGE SCALE ANALYSIS] AT SER-126 AND SER-127</scope>
    <scope>IDENTIFICATION BY MASS SPECTROMETRY [LARGE SCALE ANALYSIS]</scope>
</reference>
<reference key="20">
    <citation type="journal article" date="2013" name="Cell Rep.">
        <title>The 5S RNP couples p53 homeostasis to ribosome biogenesis and nucleolar stress.</title>
        <authorList>
            <person name="Sloan K.E."/>
            <person name="Bohnsack M.T."/>
            <person name="Watkins N.J."/>
        </authorList>
    </citation>
    <scope>FUNCTION</scope>
</reference>
<reference key="21">
    <citation type="journal article" date="2013" name="J. Proteome Res.">
        <title>Toward a comprehensive characterization of a human cancer cell phosphoproteome.</title>
        <authorList>
            <person name="Zhou H."/>
            <person name="Di Palma S."/>
            <person name="Preisinger C."/>
            <person name="Peng M."/>
            <person name="Polat A.N."/>
            <person name="Heck A.J."/>
            <person name="Mohammed S."/>
        </authorList>
    </citation>
    <scope>PHOSPHORYLATION [LARGE SCALE ANALYSIS] AT SER-126 AND SER-127</scope>
    <scope>IDENTIFICATION BY MASS SPECTROMETRY [LARGE SCALE ANALYSIS]</scope>
    <source>
        <tissue>Cervix carcinoma</tissue>
        <tissue>Erythroleukemia</tissue>
    </source>
</reference>
<reference key="22">
    <citation type="journal article" date="2014" name="J. Proteomics">
        <title>An enzyme assisted RP-RPLC approach for in-depth analysis of human liver phosphoproteome.</title>
        <authorList>
            <person name="Bian Y."/>
            <person name="Song C."/>
            <person name="Cheng K."/>
            <person name="Dong M."/>
            <person name="Wang F."/>
            <person name="Huang J."/>
            <person name="Sun D."/>
            <person name="Wang L."/>
            <person name="Ye M."/>
            <person name="Zou H."/>
        </authorList>
    </citation>
    <scope>PHOSPHORYLATION [LARGE SCALE ANALYSIS] AT TYR-122; SER-126 AND SER-127</scope>
    <scope>IDENTIFICATION BY MASS SPECTROMETRY [LARGE SCALE ANALYSIS]</scope>
    <source>
        <tissue>Liver</tissue>
    </source>
</reference>
<reference key="23">
    <citation type="journal article" date="2015" name="Exp. Cell Res.">
        <title>DEAD-box helicase DDX27 regulates 3' end formation of ribosomal 47S RNA and stably associates with the PeBoW-complex.</title>
        <authorList>
            <person name="Kellner M."/>
            <person name="Rohrmoser M."/>
            <person name="Forne I."/>
            <person name="Voss K."/>
            <person name="Burger K."/>
            <person name="Muehl B."/>
            <person name="Gruber-Eber A."/>
            <person name="Kremmer E."/>
            <person name="Imhof A."/>
            <person name="Eick D."/>
        </authorList>
    </citation>
    <scope>INTERACTION WITH DDX27</scope>
</reference>
<name>BOP1_HUMAN</name>